<keyword id="KW-0378">Hydrolase</keyword>
<keyword id="KW-0479">Metal-binding</keyword>
<keyword id="KW-0482">Metalloprotease</keyword>
<keyword id="KW-0645">Protease</keyword>
<keyword id="KW-1185">Reference proteome</keyword>
<keyword id="KW-0862">Zinc</keyword>
<accession>Q5QZB4</accession>
<gene>
    <name type="ordered locus">IL0240</name>
</gene>
<sequence>MSVKEWPVSERPREKLQTQGAEYLSDAELLAILLGSGSGGQDVVSFARRLLSDFGGVGALLTATPEQLLACNGIGPARVNQLRVVLELSRRYLKWQLERSDGFTEPTMVKDYLTSQLRHQGREVFAILLLDSQHRLLRYEELFQGTINAAPVYPREVIKLVMQYNAAAVILAHNHPSGVAEPSQADQRVTERVKKALTLIDVALLDHFVVGAGDPISFAERGLL</sequence>
<evidence type="ECO:0000255" key="1">
    <source>
        <dbReference type="PROSITE-ProRule" id="PRU01182"/>
    </source>
</evidence>
<evidence type="ECO:0000305" key="2"/>
<protein>
    <recommendedName>
        <fullName>UPF0758 protein IL0240</fullName>
    </recommendedName>
</protein>
<reference key="1">
    <citation type="journal article" date="2004" name="Proc. Natl. Acad. Sci. U.S.A.">
        <title>Genome sequence of the deep-sea gamma-proteobacterium Idiomarina loihiensis reveals amino acid fermentation as a source of carbon and energy.</title>
        <authorList>
            <person name="Hou S."/>
            <person name="Saw J.H."/>
            <person name="Lee K.S."/>
            <person name="Freitas T.A."/>
            <person name="Belisle C."/>
            <person name="Kawarabayasi Y."/>
            <person name="Donachie S.P."/>
            <person name="Pikina A."/>
            <person name="Galperin M.Y."/>
            <person name="Koonin E.V."/>
            <person name="Makarova K.S."/>
            <person name="Omelchenko M.V."/>
            <person name="Sorokin A."/>
            <person name="Wolf Y.I."/>
            <person name="Li Q.X."/>
            <person name="Keum Y.S."/>
            <person name="Campbell S."/>
            <person name="Denery J."/>
            <person name="Aizawa S."/>
            <person name="Shibata S."/>
            <person name="Malahoff A."/>
            <person name="Alam M."/>
        </authorList>
    </citation>
    <scope>NUCLEOTIDE SEQUENCE [LARGE SCALE GENOMIC DNA]</scope>
    <source>
        <strain>ATCC BAA-735 / DSM 15497 / L2-TR</strain>
    </source>
</reference>
<organism>
    <name type="scientific">Idiomarina loihiensis (strain ATCC BAA-735 / DSM 15497 / L2-TR)</name>
    <dbReference type="NCBI Taxonomy" id="283942"/>
    <lineage>
        <taxon>Bacteria</taxon>
        <taxon>Pseudomonadati</taxon>
        <taxon>Pseudomonadota</taxon>
        <taxon>Gammaproteobacteria</taxon>
        <taxon>Alteromonadales</taxon>
        <taxon>Idiomarinaceae</taxon>
        <taxon>Idiomarina</taxon>
    </lineage>
</organism>
<dbReference type="EMBL" id="AE017340">
    <property type="protein sequence ID" value="AAV81083.1"/>
    <property type="molecule type" value="Genomic_DNA"/>
</dbReference>
<dbReference type="SMR" id="Q5QZB4"/>
<dbReference type="STRING" id="283942.IL0240"/>
<dbReference type="GeneID" id="41335386"/>
<dbReference type="KEGG" id="ilo:IL0240"/>
<dbReference type="eggNOG" id="COG2003">
    <property type="taxonomic scope" value="Bacteria"/>
</dbReference>
<dbReference type="HOGENOM" id="CLU_073529_0_2_6"/>
<dbReference type="OrthoDB" id="9804482at2"/>
<dbReference type="Proteomes" id="UP000001171">
    <property type="component" value="Chromosome"/>
</dbReference>
<dbReference type="GO" id="GO:0046872">
    <property type="term" value="F:metal ion binding"/>
    <property type="evidence" value="ECO:0007669"/>
    <property type="project" value="UniProtKB-KW"/>
</dbReference>
<dbReference type="GO" id="GO:0008237">
    <property type="term" value="F:metallopeptidase activity"/>
    <property type="evidence" value="ECO:0007669"/>
    <property type="project" value="UniProtKB-KW"/>
</dbReference>
<dbReference type="GO" id="GO:0006508">
    <property type="term" value="P:proteolysis"/>
    <property type="evidence" value="ECO:0007669"/>
    <property type="project" value="UniProtKB-KW"/>
</dbReference>
<dbReference type="CDD" id="cd08071">
    <property type="entry name" value="MPN_DUF2466"/>
    <property type="match status" value="1"/>
</dbReference>
<dbReference type="Gene3D" id="1.10.150.20">
    <property type="entry name" value="5' to 3' exonuclease, C-terminal subdomain"/>
    <property type="match status" value="1"/>
</dbReference>
<dbReference type="Gene3D" id="3.40.140.10">
    <property type="entry name" value="Cytidine Deaminase, domain 2"/>
    <property type="match status" value="1"/>
</dbReference>
<dbReference type="InterPro" id="IPR037518">
    <property type="entry name" value="MPN"/>
</dbReference>
<dbReference type="InterPro" id="IPR025657">
    <property type="entry name" value="RadC_JAB"/>
</dbReference>
<dbReference type="InterPro" id="IPR010994">
    <property type="entry name" value="RuvA_2-like"/>
</dbReference>
<dbReference type="InterPro" id="IPR001405">
    <property type="entry name" value="UPF0758"/>
</dbReference>
<dbReference type="InterPro" id="IPR020891">
    <property type="entry name" value="UPF0758_CS"/>
</dbReference>
<dbReference type="InterPro" id="IPR046778">
    <property type="entry name" value="UPF0758_N"/>
</dbReference>
<dbReference type="NCBIfam" id="NF000642">
    <property type="entry name" value="PRK00024.1"/>
    <property type="match status" value="1"/>
</dbReference>
<dbReference type="NCBIfam" id="TIGR00608">
    <property type="entry name" value="radc"/>
    <property type="match status" value="1"/>
</dbReference>
<dbReference type="PANTHER" id="PTHR30471">
    <property type="entry name" value="DNA REPAIR PROTEIN RADC"/>
    <property type="match status" value="1"/>
</dbReference>
<dbReference type="PANTHER" id="PTHR30471:SF3">
    <property type="entry name" value="UPF0758 PROTEIN YEES-RELATED"/>
    <property type="match status" value="1"/>
</dbReference>
<dbReference type="Pfam" id="PF04002">
    <property type="entry name" value="RadC"/>
    <property type="match status" value="1"/>
</dbReference>
<dbReference type="Pfam" id="PF20582">
    <property type="entry name" value="UPF0758_N"/>
    <property type="match status" value="1"/>
</dbReference>
<dbReference type="SUPFAM" id="SSF102712">
    <property type="entry name" value="JAB1/MPN domain"/>
    <property type="match status" value="1"/>
</dbReference>
<dbReference type="SUPFAM" id="SSF47781">
    <property type="entry name" value="RuvA domain 2-like"/>
    <property type="match status" value="1"/>
</dbReference>
<dbReference type="PROSITE" id="PS50249">
    <property type="entry name" value="MPN"/>
    <property type="match status" value="1"/>
</dbReference>
<dbReference type="PROSITE" id="PS01302">
    <property type="entry name" value="UPF0758"/>
    <property type="match status" value="1"/>
</dbReference>
<comment type="similarity">
    <text evidence="2">Belongs to the UPF0758 family.</text>
</comment>
<proteinExistence type="inferred from homology"/>
<feature type="chain" id="PRO_0000190705" description="UPF0758 protein IL0240">
    <location>
        <begin position="1"/>
        <end position="224"/>
    </location>
</feature>
<feature type="domain" description="MPN" evidence="1">
    <location>
        <begin position="102"/>
        <end position="224"/>
    </location>
</feature>
<feature type="short sequence motif" description="JAMM motif" evidence="1">
    <location>
        <begin position="173"/>
        <end position="186"/>
    </location>
</feature>
<feature type="binding site" evidence="1">
    <location>
        <position position="173"/>
    </location>
    <ligand>
        <name>Zn(2+)</name>
        <dbReference type="ChEBI" id="CHEBI:29105"/>
        <note>catalytic</note>
    </ligand>
</feature>
<feature type="binding site" evidence="1">
    <location>
        <position position="175"/>
    </location>
    <ligand>
        <name>Zn(2+)</name>
        <dbReference type="ChEBI" id="CHEBI:29105"/>
        <note>catalytic</note>
    </ligand>
</feature>
<feature type="binding site" evidence="1">
    <location>
        <position position="186"/>
    </location>
    <ligand>
        <name>Zn(2+)</name>
        <dbReference type="ChEBI" id="CHEBI:29105"/>
        <note>catalytic</note>
    </ligand>
</feature>
<name>Y240_IDILO</name>